<gene>
    <name type="primary">melC2</name>
    <name type="synonym">mel</name>
</gene>
<name>TYRO_STRLN</name>
<dbReference type="EC" id="1.14.18.1"/>
<dbReference type="EMBL" id="X95703">
    <property type="protein sequence ID" value="CAA65000.1"/>
    <property type="molecule type" value="Genomic_DNA"/>
</dbReference>
<dbReference type="SMR" id="P55023"/>
<dbReference type="STRING" id="1915.SLINC_0493"/>
<dbReference type="GO" id="GO:0046872">
    <property type="term" value="F:metal ion binding"/>
    <property type="evidence" value="ECO:0007669"/>
    <property type="project" value="UniProtKB-KW"/>
</dbReference>
<dbReference type="GO" id="GO:0004503">
    <property type="term" value="F:tyrosinase activity"/>
    <property type="evidence" value="ECO:0007669"/>
    <property type="project" value="UniProtKB-EC"/>
</dbReference>
<dbReference type="GO" id="GO:0042438">
    <property type="term" value="P:melanin biosynthetic process"/>
    <property type="evidence" value="ECO:0007669"/>
    <property type="project" value="UniProtKB-KW"/>
</dbReference>
<dbReference type="Gene3D" id="1.10.1280.10">
    <property type="entry name" value="Di-copper center containing domain from catechol oxidase"/>
    <property type="match status" value="1"/>
</dbReference>
<dbReference type="InterPro" id="IPR008922">
    <property type="entry name" value="Di-copper_centre_dom_sf"/>
</dbReference>
<dbReference type="InterPro" id="IPR050316">
    <property type="entry name" value="Tyrosinase/Hemocyanin"/>
</dbReference>
<dbReference type="InterPro" id="IPR002227">
    <property type="entry name" value="Tyrosinase_Cu-bd"/>
</dbReference>
<dbReference type="NCBIfam" id="NF047834">
    <property type="entry name" value="TyrosinaseMelC2"/>
    <property type="match status" value="1"/>
</dbReference>
<dbReference type="PANTHER" id="PTHR11474">
    <property type="entry name" value="TYROSINASE FAMILY MEMBER"/>
    <property type="match status" value="1"/>
</dbReference>
<dbReference type="PANTHER" id="PTHR11474:SF126">
    <property type="entry name" value="TYROSINASE-LIKE PROTEIN TYR-1-RELATED"/>
    <property type="match status" value="1"/>
</dbReference>
<dbReference type="Pfam" id="PF00264">
    <property type="entry name" value="Tyrosinase"/>
    <property type="match status" value="1"/>
</dbReference>
<dbReference type="PRINTS" id="PR00092">
    <property type="entry name" value="TYROSINASE"/>
</dbReference>
<dbReference type="SUPFAM" id="SSF48056">
    <property type="entry name" value="Di-copper centre-containing domain"/>
    <property type="match status" value="1"/>
</dbReference>
<dbReference type="PROSITE" id="PS00497">
    <property type="entry name" value="TYROSINASE_1"/>
    <property type="match status" value="1"/>
</dbReference>
<dbReference type="PROSITE" id="PS00498">
    <property type="entry name" value="TYROSINASE_2"/>
    <property type="match status" value="1"/>
</dbReference>
<reference key="1">
    <citation type="submission" date="1996-02" db="EMBL/GenBank/DDBJ databases">
        <authorList>
            <person name="Zhang H.Z."/>
            <person name="Piepersberg W."/>
        </authorList>
    </citation>
    <scope>NUCLEOTIDE SEQUENCE [GENOMIC DNA]</scope>
    <source>
        <strain>78-11</strain>
    </source>
</reference>
<comment type="function">
    <text>This is a copper-containing oxidase that functions in the formation of pigments such as melanins and other polyphenolic compounds.</text>
</comment>
<comment type="catalytic activity">
    <reaction>
        <text>2 L-dopa + O2 = 2 L-dopaquinone + 2 H2O</text>
        <dbReference type="Rhea" id="RHEA:34287"/>
        <dbReference type="ChEBI" id="CHEBI:15377"/>
        <dbReference type="ChEBI" id="CHEBI:15379"/>
        <dbReference type="ChEBI" id="CHEBI:57504"/>
        <dbReference type="ChEBI" id="CHEBI:57924"/>
        <dbReference type="EC" id="1.14.18.1"/>
    </reaction>
</comment>
<comment type="catalytic activity">
    <reaction>
        <text>L-tyrosine + O2 = L-dopaquinone + H2O</text>
        <dbReference type="Rhea" id="RHEA:18117"/>
        <dbReference type="ChEBI" id="CHEBI:15377"/>
        <dbReference type="ChEBI" id="CHEBI:15379"/>
        <dbReference type="ChEBI" id="CHEBI:57924"/>
        <dbReference type="ChEBI" id="CHEBI:58315"/>
        <dbReference type="EC" id="1.14.18.1"/>
    </reaction>
</comment>
<comment type="cofactor">
    <cofactor evidence="2">
        <name>Cu(2+)</name>
        <dbReference type="ChEBI" id="CHEBI:29036"/>
    </cofactor>
    <text evidence="2">Binds 2 copper ions per subunit.</text>
</comment>
<comment type="similarity">
    <text evidence="3">Belongs to the tyrosinase family.</text>
</comment>
<accession>P55023</accession>
<keyword id="KW-0186">Copper</keyword>
<keyword id="KW-0470">Melanin biosynthesis</keyword>
<keyword id="KW-0479">Metal-binding</keyword>
<keyword id="KW-0503">Monooxygenase</keyword>
<keyword id="KW-0560">Oxidoreductase</keyword>
<proteinExistence type="inferred from homology"/>
<sequence>MTVRKNQATLTADEKRRFVTAVLSSSAARYDTFVTTHNEFIVADTDNGERTGHRSPSFLPWHRRFLLEFERALQSVDASVALPYWDWSTDRSARSSLWAPDFLGGTGRSRNGRVTDGPFRAATGVWPITVRLDGRTYLRRALGGAGRELPTRAEVDSVLSIPTYDMAPWNSASDGFRNHLEGWRGVNLHNRVHVWVGGQMATGVSPNDPVFWLHHAYIDKLWAQWQRRHRTPAYVPAAGTPDVVDLDETMKPWHDSSPADLLDHTGHYTFDTD</sequence>
<evidence type="ECO:0000250" key="1"/>
<evidence type="ECO:0000250" key="2">
    <source>
        <dbReference type="UniProtKB" id="Q9ZP19"/>
    </source>
</evidence>
<evidence type="ECO:0000305" key="3"/>
<organism>
    <name type="scientific">Streptomyces lincolnensis</name>
    <dbReference type="NCBI Taxonomy" id="1915"/>
    <lineage>
        <taxon>Bacteria</taxon>
        <taxon>Bacillati</taxon>
        <taxon>Actinomycetota</taxon>
        <taxon>Actinomycetes</taxon>
        <taxon>Kitasatosporales</taxon>
        <taxon>Streptomycetaceae</taxon>
        <taxon>Streptomyces</taxon>
    </lineage>
</organism>
<feature type="initiator methionine" description="Removed" evidence="1">
    <location>
        <position position="1"/>
    </location>
</feature>
<feature type="chain" id="PRO_0000186739" description="Tyrosinase">
    <location>
        <begin position="2"/>
        <end position="273"/>
    </location>
</feature>
<feature type="binding site" evidence="2">
    <location>
        <position position="37"/>
    </location>
    <ligand>
        <name>Cu cation</name>
        <dbReference type="ChEBI" id="CHEBI:23378"/>
        <label>A</label>
    </ligand>
</feature>
<feature type="binding site" evidence="2">
    <location>
        <position position="53"/>
    </location>
    <ligand>
        <name>Cu cation</name>
        <dbReference type="ChEBI" id="CHEBI:23378"/>
        <label>A</label>
    </ligand>
</feature>
<feature type="binding site" evidence="2">
    <location>
        <position position="62"/>
    </location>
    <ligand>
        <name>Cu cation</name>
        <dbReference type="ChEBI" id="CHEBI:23378"/>
        <label>A</label>
    </ligand>
</feature>
<feature type="binding site" evidence="2">
    <location>
        <position position="189"/>
    </location>
    <ligand>
        <name>Cu cation</name>
        <dbReference type="ChEBI" id="CHEBI:23378"/>
        <label>B</label>
    </ligand>
</feature>
<feature type="binding site" evidence="2">
    <location>
        <position position="193"/>
    </location>
    <ligand>
        <name>Cu cation</name>
        <dbReference type="ChEBI" id="CHEBI:23378"/>
        <label>B</label>
    </ligand>
</feature>
<feature type="binding site" evidence="2">
    <location>
        <position position="215"/>
    </location>
    <ligand>
        <name>Cu cation</name>
        <dbReference type="ChEBI" id="CHEBI:23378"/>
        <label>B</label>
    </ligand>
</feature>
<protein>
    <recommendedName>
        <fullName>Tyrosinase</fullName>
        <ecNumber>1.14.18.1</ecNumber>
    </recommendedName>
    <alternativeName>
        <fullName>Monophenol monooxygenase</fullName>
    </alternativeName>
</protein>